<proteinExistence type="inferred from homology"/>
<feature type="chain" id="PRO_0000150559" description="Olfactory receptor 4K17">
    <location>
        <begin position="1"/>
        <end position="312"/>
    </location>
</feature>
<feature type="topological domain" description="Extracellular" evidence="1">
    <location>
        <begin position="1"/>
        <end position="25"/>
    </location>
</feature>
<feature type="transmembrane region" description="Helical; Name=1" evidence="1">
    <location>
        <begin position="26"/>
        <end position="49"/>
    </location>
</feature>
<feature type="topological domain" description="Cytoplasmic" evidence="1">
    <location>
        <begin position="50"/>
        <end position="57"/>
    </location>
</feature>
<feature type="transmembrane region" description="Helical; Name=2" evidence="1">
    <location>
        <begin position="58"/>
        <end position="79"/>
    </location>
</feature>
<feature type="topological domain" description="Extracellular" evidence="1">
    <location>
        <begin position="80"/>
        <end position="100"/>
    </location>
</feature>
<feature type="transmembrane region" description="Helical; Name=3" evidence="1">
    <location>
        <begin position="101"/>
        <end position="120"/>
    </location>
</feature>
<feature type="topological domain" description="Cytoplasmic" evidence="1">
    <location>
        <begin position="121"/>
        <end position="139"/>
    </location>
</feature>
<feature type="transmembrane region" description="Helical; Name=4" evidence="1">
    <location>
        <begin position="140"/>
        <end position="158"/>
    </location>
</feature>
<feature type="topological domain" description="Extracellular" evidence="1">
    <location>
        <begin position="159"/>
        <end position="195"/>
    </location>
</feature>
<feature type="transmembrane region" description="Helical; Name=5" evidence="1">
    <location>
        <begin position="196"/>
        <end position="219"/>
    </location>
</feature>
<feature type="topological domain" description="Cytoplasmic" evidence="1">
    <location>
        <begin position="220"/>
        <end position="235"/>
    </location>
</feature>
<feature type="transmembrane region" description="Helical; Name=6" evidence="1">
    <location>
        <begin position="236"/>
        <end position="258"/>
    </location>
</feature>
<feature type="topological domain" description="Extracellular" evidence="1">
    <location>
        <begin position="259"/>
        <end position="269"/>
    </location>
</feature>
<feature type="transmembrane region" description="Helical; Name=7" evidence="1">
    <location>
        <begin position="270"/>
        <end position="289"/>
    </location>
</feature>
<feature type="topological domain" description="Cytoplasmic" evidence="1">
    <location>
        <begin position="290"/>
        <end position="312"/>
    </location>
</feature>
<feature type="glycosylation site" description="N-linked (GlcNAc...) asparagine" evidence="1">
    <location>
        <position position="5"/>
    </location>
</feature>
<feature type="glycosylation site" description="N-linked (GlcNAc...) asparagine" evidence="1">
    <location>
        <position position="264"/>
    </location>
</feature>
<feature type="disulfide bond" evidence="2">
    <location>
        <begin position="97"/>
        <end position="189"/>
    </location>
</feature>
<dbReference type="EMBL" id="AB065891">
    <property type="protein sequence ID" value="BAC06107.1"/>
    <property type="status" value="ALT_INIT"/>
    <property type="molecule type" value="Genomic_DNA"/>
</dbReference>
<dbReference type="EMBL" id="AL163152">
    <property type="status" value="NOT_ANNOTATED_CDS"/>
    <property type="molecule type" value="Genomic_DNA"/>
</dbReference>
<dbReference type="EMBL" id="BK004450">
    <property type="protein sequence ID" value="DAA04848.1"/>
    <property type="status" value="ALT_INIT"/>
    <property type="molecule type" value="Genomic_DNA"/>
</dbReference>
<dbReference type="CCDS" id="CCDS32030.2"/>
<dbReference type="RefSeq" id="NP_001004715.3">
    <property type="nucleotide sequence ID" value="NM_001004715.5"/>
</dbReference>
<dbReference type="SMR" id="Q8NGC6"/>
<dbReference type="BioGRID" id="133563">
    <property type="interactions" value="1"/>
</dbReference>
<dbReference type="FunCoup" id="Q8NGC6">
    <property type="interactions" value="416"/>
</dbReference>
<dbReference type="IntAct" id="Q8NGC6">
    <property type="interactions" value="1"/>
</dbReference>
<dbReference type="STRING" id="9606.ENSP00000319197"/>
<dbReference type="GlyCosmos" id="Q8NGC6">
    <property type="glycosylation" value="2 sites, No reported glycans"/>
</dbReference>
<dbReference type="GlyGen" id="Q8NGC6">
    <property type="glycosylation" value="2 sites"/>
</dbReference>
<dbReference type="PhosphoSitePlus" id="Q8NGC6"/>
<dbReference type="BioMuta" id="OR4K17"/>
<dbReference type="DMDM" id="229462954"/>
<dbReference type="PaxDb" id="9606-ENSP00000319197"/>
<dbReference type="PeptideAtlas" id="Q8NGC6"/>
<dbReference type="Antibodypedia" id="63908">
    <property type="antibodies" value="38 antibodies from 17 providers"/>
</dbReference>
<dbReference type="DNASU" id="390436"/>
<dbReference type="Ensembl" id="ENST00000641386.2">
    <property type="protein sequence ID" value="ENSP00000493449.2"/>
    <property type="gene ID" value="ENSG00000176230.7"/>
</dbReference>
<dbReference type="Ensembl" id="ENST00000641633.2">
    <property type="protein sequence ID" value="ENSP00000493115.2"/>
    <property type="gene ID" value="ENSG00000176230.7"/>
</dbReference>
<dbReference type="Ensembl" id="ENST00000708848.1">
    <property type="protein sequence ID" value="ENSP00000517379.1"/>
    <property type="gene ID" value="ENSG00000291811.1"/>
</dbReference>
<dbReference type="Ensembl" id="ENST00000708849.1">
    <property type="protein sequence ID" value="ENSP00000517380.1"/>
    <property type="gene ID" value="ENSG00000291811.1"/>
</dbReference>
<dbReference type="GeneID" id="390436"/>
<dbReference type="MANE-Select" id="ENST00000641386.2">
    <property type="protein sequence ID" value="ENSP00000493449.2"/>
    <property type="RefSeq nucleotide sequence ID" value="NM_001004715.5"/>
    <property type="RefSeq protein sequence ID" value="NP_001004715.3"/>
</dbReference>
<dbReference type="UCSC" id="uc001vwo.1">
    <property type="organism name" value="human"/>
</dbReference>
<dbReference type="AGR" id="HGNC:15355"/>
<dbReference type="GeneCards" id="OR4K17"/>
<dbReference type="HGNC" id="HGNC:15355">
    <property type="gene designation" value="OR4K17"/>
</dbReference>
<dbReference type="HPA" id="ENSG00000176230">
    <property type="expression patterns" value="Tissue enhanced (liver)"/>
</dbReference>
<dbReference type="neXtProt" id="NX_Q8NGC6"/>
<dbReference type="VEuPathDB" id="HostDB:ENSG00000176230"/>
<dbReference type="eggNOG" id="ENOG502RMP4">
    <property type="taxonomic scope" value="Eukaryota"/>
</dbReference>
<dbReference type="GeneTree" id="ENSGT00940000164231"/>
<dbReference type="HOGENOM" id="CLU_012526_8_2_1"/>
<dbReference type="InParanoid" id="Q8NGC6"/>
<dbReference type="OMA" id="HGMSDLF"/>
<dbReference type="OrthoDB" id="9578094at2759"/>
<dbReference type="PAN-GO" id="Q8NGC6">
    <property type="GO annotations" value="2 GO annotations based on evolutionary models"/>
</dbReference>
<dbReference type="PhylomeDB" id="Q8NGC6"/>
<dbReference type="TreeFam" id="TF337251"/>
<dbReference type="PathwayCommons" id="Q8NGC6"/>
<dbReference type="Reactome" id="R-HSA-9752946">
    <property type="pathway name" value="Expression and translocation of olfactory receptors"/>
</dbReference>
<dbReference type="SignaLink" id="Q8NGC6"/>
<dbReference type="BioGRID-ORCS" id="390436">
    <property type="hits" value="11 hits in 741 CRISPR screens"/>
</dbReference>
<dbReference type="GeneWiki" id="OR4K17"/>
<dbReference type="GenomeRNAi" id="390436"/>
<dbReference type="Pharos" id="Q8NGC6">
    <property type="development level" value="Tdark"/>
</dbReference>
<dbReference type="PRO" id="PR:Q8NGC6"/>
<dbReference type="Proteomes" id="UP000005640">
    <property type="component" value="Chromosome 14"/>
</dbReference>
<dbReference type="RNAct" id="Q8NGC6">
    <property type="molecule type" value="protein"/>
</dbReference>
<dbReference type="Bgee" id="ENSG00000176230">
    <property type="expression patterns" value="Expressed in liver"/>
</dbReference>
<dbReference type="GO" id="GO:0005886">
    <property type="term" value="C:plasma membrane"/>
    <property type="evidence" value="ECO:0007669"/>
    <property type="project" value="UniProtKB-SubCell"/>
</dbReference>
<dbReference type="GO" id="GO:0004930">
    <property type="term" value="F:G protein-coupled receptor activity"/>
    <property type="evidence" value="ECO:0007669"/>
    <property type="project" value="UniProtKB-KW"/>
</dbReference>
<dbReference type="GO" id="GO:0004984">
    <property type="term" value="F:olfactory receptor activity"/>
    <property type="evidence" value="ECO:0000318"/>
    <property type="project" value="GO_Central"/>
</dbReference>
<dbReference type="CDD" id="cd15226">
    <property type="entry name" value="7tmA_OR4-like"/>
    <property type="match status" value="1"/>
</dbReference>
<dbReference type="FunFam" id="1.20.1070.10:FF:000012">
    <property type="entry name" value="Olfactory receptor"/>
    <property type="match status" value="1"/>
</dbReference>
<dbReference type="Gene3D" id="1.20.1070.10">
    <property type="entry name" value="Rhodopsin 7-helix transmembrane proteins"/>
    <property type="match status" value="1"/>
</dbReference>
<dbReference type="InterPro" id="IPR000276">
    <property type="entry name" value="GPCR_Rhodpsn"/>
</dbReference>
<dbReference type="InterPro" id="IPR017452">
    <property type="entry name" value="GPCR_Rhodpsn_7TM"/>
</dbReference>
<dbReference type="InterPro" id="IPR000725">
    <property type="entry name" value="Olfact_rcpt"/>
</dbReference>
<dbReference type="InterPro" id="IPR050427">
    <property type="entry name" value="Olfactory_Receptors"/>
</dbReference>
<dbReference type="PANTHER" id="PTHR48002">
    <property type="entry name" value="OLFACTORY RECEPTOR"/>
    <property type="match status" value="1"/>
</dbReference>
<dbReference type="Pfam" id="PF13853">
    <property type="entry name" value="7tm_4"/>
    <property type="match status" value="1"/>
</dbReference>
<dbReference type="PRINTS" id="PR00237">
    <property type="entry name" value="GPCRRHODOPSN"/>
</dbReference>
<dbReference type="PRINTS" id="PR00245">
    <property type="entry name" value="OLFACTORYR"/>
</dbReference>
<dbReference type="SUPFAM" id="SSF81321">
    <property type="entry name" value="Family A G protein-coupled receptor-like"/>
    <property type="match status" value="1"/>
</dbReference>
<dbReference type="PROSITE" id="PS00237">
    <property type="entry name" value="G_PROTEIN_RECEP_F1_1"/>
    <property type="match status" value="1"/>
</dbReference>
<dbReference type="PROSITE" id="PS50262">
    <property type="entry name" value="G_PROTEIN_RECEP_F1_2"/>
    <property type="match status" value="1"/>
</dbReference>
<comment type="function">
    <text evidence="3">Odorant receptor.</text>
</comment>
<comment type="subcellular location">
    <subcellularLocation>
        <location>Cell membrane</location>
        <topology>Multi-pass membrane protein</topology>
    </subcellularLocation>
</comment>
<comment type="similarity">
    <text evidence="2">Belongs to the G-protein coupled receptor 1 family.</text>
</comment>
<comment type="sequence caution" evidence="3">
    <conflict type="erroneous initiation">
        <sequence resource="EMBL-CDS" id="BAC06107"/>
    </conflict>
    <text>Extended N-terminus.</text>
</comment>
<comment type="sequence caution" evidence="3">
    <conflict type="erroneous initiation">
        <sequence resource="EMBL-CDS" id="DAA04848"/>
    </conflict>
    <text>Extended N-terminus.</text>
</comment>
<comment type="online information" name="Human Olfactory Receptor Data Exploratorium (HORDE)">
    <link uri="http://genome.weizmann.ac.il/horde/card/index/symbol:OR4K17"/>
</comment>
<evidence type="ECO:0000255" key="1"/>
<evidence type="ECO:0000255" key="2">
    <source>
        <dbReference type="PROSITE-ProRule" id="PRU00521"/>
    </source>
</evidence>
<evidence type="ECO:0000305" key="3"/>
<protein>
    <recommendedName>
        <fullName>Olfactory receptor 4K17</fullName>
    </recommendedName>
    <alternativeName>
        <fullName>Olfactory receptor OR14-29</fullName>
    </alternativeName>
</protein>
<organism>
    <name type="scientific">Homo sapiens</name>
    <name type="common">Human</name>
    <dbReference type="NCBI Taxonomy" id="9606"/>
    <lineage>
        <taxon>Eukaryota</taxon>
        <taxon>Metazoa</taxon>
        <taxon>Chordata</taxon>
        <taxon>Craniata</taxon>
        <taxon>Vertebrata</taxon>
        <taxon>Euteleostomi</taxon>
        <taxon>Mammalia</taxon>
        <taxon>Eutheria</taxon>
        <taxon>Euarchontoglires</taxon>
        <taxon>Primates</taxon>
        <taxon>Haplorrhini</taxon>
        <taxon>Catarrhini</taxon>
        <taxon>Hominidae</taxon>
        <taxon>Homo</taxon>
    </lineage>
</organism>
<keyword id="KW-1003">Cell membrane</keyword>
<keyword id="KW-1015">Disulfide bond</keyword>
<keyword id="KW-0297">G-protein coupled receptor</keyword>
<keyword id="KW-0325">Glycoprotein</keyword>
<keyword id="KW-0472">Membrane</keyword>
<keyword id="KW-0552">Olfaction</keyword>
<keyword id="KW-0675">Receptor</keyword>
<keyword id="KW-1185">Reference proteome</keyword>
<keyword id="KW-0716">Sensory transduction</keyword>
<keyword id="KW-0807">Transducer</keyword>
<keyword id="KW-0812">Transmembrane</keyword>
<keyword id="KW-1133">Transmembrane helix</keyword>
<gene>
    <name type="primary">OR4K17</name>
</gene>
<accession>Q8NGC6</accession>
<accession>Q6IF12</accession>
<reference key="1">
    <citation type="submission" date="2001-07" db="EMBL/GenBank/DDBJ databases">
        <title>Genome-wide discovery and analysis of human seven transmembrane helix receptor genes.</title>
        <authorList>
            <person name="Suwa M."/>
            <person name="Sato T."/>
            <person name="Okouchi I."/>
            <person name="Arita M."/>
            <person name="Futami K."/>
            <person name="Matsumoto S."/>
            <person name="Tsutsumi S."/>
            <person name="Aburatani H."/>
            <person name="Asai K."/>
            <person name="Akiyama Y."/>
        </authorList>
    </citation>
    <scope>NUCLEOTIDE SEQUENCE [GENOMIC DNA]</scope>
</reference>
<reference key="2">
    <citation type="journal article" date="2003" name="Nature">
        <title>The DNA sequence and analysis of human chromosome 14.</title>
        <authorList>
            <person name="Heilig R."/>
            <person name="Eckenberg R."/>
            <person name="Petit J.-L."/>
            <person name="Fonknechten N."/>
            <person name="Da Silva C."/>
            <person name="Cattolico L."/>
            <person name="Levy M."/>
            <person name="Barbe V."/>
            <person name="De Berardinis V."/>
            <person name="Ureta-Vidal A."/>
            <person name="Pelletier E."/>
            <person name="Vico V."/>
            <person name="Anthouard V."/>
            <person name="Rowen L."/>
            <person name="Madan A."/>
            <person name="Qin S."/>
            <person name="Sun H."/>
            <person name="Du H."/>
            <person name="Pepin K."/>
            <person name="Artiguenave F."/>
            <person name="Robert C."/>
            <person name="Cruaud C."/>
            <person name="Bruels T."/>
            <person name="Jaillon O."/>
            <person name="Friedlander L."/>
            <person name="Samson G."/>
            <person name="Brottier P."/>
            <person name="Cure S."/>
            <person name="Segurens B."/>
            <person name="Aniere F."/>
            <person name="Samain S."/>
            <person name="Crespeau H."/>
            <person name="Abbasi N."/>
            <person name="Aiach N."/>
            <person name="Boscus D."/>
            <person name="Dickhoff R."/>
            <person name="Dors M."/>
            <person name="Dubois I."/>
            <person name="Friedman C."/>
            <person name="Gouyvenoux M."/>
            <person name="James R."/>
            <person name="Madan A."/>
            <person name="Mairey-Estrada B."/>
            <person name="Mangenot S."/>
            <person name="Martins N."/>
            <person name="Menard M."/>
            <person name="Oztas S."/>
            <person name="Ratcliffe A."/>
            <person name="Shaffer T."/>
            <person name="Trask B."/>
            <person name="Vacherie B."/>
            <person name="Bellemere C."/>
            <person name="Belser C."/>
            <person name="Besnard-Gonnet M."/>
            <person name="Bartol-Mavel D."/>
            <person name="Boutard M."/>
            <person name="Briez-Silla S."/>
            <person name="Combette S."/>
            <person name="Dufosse-Laurent V."/>
            <person name="Ferron C."/>
            <person name="Lechaplais C."/>
            <person name="Louesse C."/>
            <person name="Muselet D."/>
            <person name="Magdelenat G."/>
            <person name="Pateau E."/>
            <person name="Petit E."/>
            <person name="Sirvain-Trukniewicz P."/>
            <person name="Trybou A."/>
            <person name="Vega-Czarny N."/>
            <person name="Bataille E."/>
            <person name="Bluet E."/>
            <person name="Bordelais I."/>
            <person name="Dubois M."/>
            <person name="Dumont C."/>
            <person name="Guerin T."/>
            <person name="Haffray S."/>
            <person name="Hammadi R."/>
            <person name="Muanga J."/>
            <person name="Pellouin V."/>
            <person name="Robert D."/>
            <person name="Wunderle E."/>
            <person name="Gauguet G."/>
            <person name="Roy A."/>
            <person name="Sainte-Marthe L."/>
            <person name="Verdier J."/>
            <person name="Verdier-Discala C."/>
            <person name="Hillier L.W."/>
            <person name="Fulton L."/>
            <person name="McPherson J."/>
            <person name="Matsuda F."/>
            <person name="Wilson R."/>
            <person name="Scarpelli C."/>
            <person name="Gyapay G."/>
            <person name="Wincker P."/>
            <person name="Saurin W."/>
            <person name="Quetier F."/>
            <person name="Waterston R."/>
            <person name="Hood L."/>
            <person name="Weissenbach J."/>
        </authorList>
    </citation>
    <scope>NUCLEOTIDE SEQUENCE [LARGE SCALE GENOMIC DNA]</scope>
</reference>
<reference key="3">
    <citation type="journal article" date="2004" name="Proc. Natl. Acad. Sci. U.S.A.">
        <title>The human olfactory receptor gene family.</title>
        <authorList>
            <person name="Malnic B."/>
            <person name="Godfrey P.A."/>
            <person name="Buck L.B."/>
        </authorList>
    </citation>
    <scope>IDENTIFICATION</scope>
</reference>
<reference key="4">
    <citation type="journal article" date="2004" name="Proc. Natl. Acad. Sci. U.S.A.">
        <authorList>
            <person name="Malnic B."/>
            <person name="Godfrey P.A."/>
            <person name="Buck L.B."/>
        </authorList>
    </citation>
    <scope>ERRATUM OF PUBMED:14983052</scope>
</reference>
<sequence length="312" mass="34980">MKLLNQSQVSEFILLGLTSSQDVEFLLFALFSVIYVVTVLGNLLIIVTVFNTPNLNTPMYFLLGNLSFVDMTLASFATPKVILNLLKKQKVISFAGCFTQIFLLHLLGGVEMVLLVSMAFDRYVAICKPLHYMTIMNKKVCVLLVVTSWLLGLLHSGFQIPFAVNLPFCGPNVVDSIFCDLPLVTKLACIDIYFVQVVIVANSGIISLSCFIILLISYSLILITIKNHSPTGQSKARSTLTAHITVVILFFGPCIFIYIWPFGNHSVDKFLAVFYTIITPILNPIIYTLRNKEMKISMKKLWRAFVNSREDT</sequence>
<name>OR4KH_HUMAN</name>